<proteinExistence type="evidence at protein level"/>
<reference key="1">
    <citation type="journal article" date="1997" name="Microbiology">
        <title>Nucleotide sequence and analysis of the phoB-rrnE-groESL region of the Bacillus subtilis chromosome.</title>
        <authorList>
            <person name="Sadaie Y."/>
            <person name="Yata K."/>
            <person name="Fujita M."/>
            <person name="Sagai H."/>
            <person name="Itaya M."/>
            <person name="Kasahara Y."/>
            <person name="Ogasawara N."/>
        </authorList>
    </citation>
    <scope>NUCLEOTIDE SEQUENCE [GENOMIC DNA]</scope>
    <source>
        <strain>168 / JH642</strain>
    </source>
</reference>
<reference key="2">
    <citation type="journal article" date="1997" name="Nature">
        <title>The complete genome sequence of the Gram-positive bacterium Bacillus subtilis.</title>
        <authorList>
            <person name="Kunst F."/>
            <person name="Ogasawara N."/>
            <person name="Moszer I."/>
            <person name="Albertini A.M."/>
            <person name="Alloni G."/>
            <person name="Azevedo V."/>
            <person name="Bertero M.G."/>
            <person name="Bessieres P."/>
            <person name="Bolotin A."/>
            <person name="Borchert S."/>
            <person name="Borriss R."/>
            <person name="Boursier L."/>
            <person name="Brans A."/>
            <person name="Braun M."/>
            <person name="Brignell S.C."/>
            <person name="Bron S."/>
            <person name="Brouillet S."/>
            <person name="Bruschi C.V."/>
            <person name="Caldwell B."/>
            <person name="Capuano V."/>
            <person name="Carter N.M."/>
            <person name="Choi S.-K."/>
            <person name="Codani J.-J."/>
            <person name="Connerton I.F."/>
            <person name="Cummings N.J."/>
            <person name="Daniel R.A."/>
            <person name="Denizot F."/>
            <person name="Devine K.M."/>
            <person name="Duesterhoeft A."/>
            <person name="Ehrlich S.D."/>
            <person name="Emmerson P.T."/>
            <person name="Entian K.-D."/>
            <person name="Errington J."/>
            <person name="Fabret C."/>
            <person name="Ferrari E."/>
            <person name="Foulger D."/>
            <person name="Fritz C."/>
            <person name="Fujita M."/>
            <person name="Fujita Y."/>
            <person name="Fuma S."/>
            <person name="Galizzi A."/>
            <person name="Galleron N."/>
            <person name="Ghim S.-Y."/>
            <person name="Glaser P."/>
            <person name="Goffeau A."/>
            <person name="Golightly E.J."/>
            <person name="Grandi G."/>
            <person name="Guiseppi G."/>
            <person name="Guy B.J."/>
            <person name="Haga K."/>
            <person name="Haiech J."/>
            <person name="Harwood C.R."/>
            <person name="Henaut A."/>
            <person name="Hilbert H."/>
            <person name="Holsappel S."/>
            <person name="Hosono S."/>
            <person name="Hullo M.-F."/>
            <person name="Itaya M."/>
            <person name="Jones L.-M."/>
            <person name="Joris B."/>
            <person name="Karamata D."/>
            <person name="Kasahara Y."/>
            <person name="Klaerr-Blanchard M."/>
            <person name="Klein C."/>
            <person name="Kobayashi Y."/>
            <person name="Koetter P."/>
            <person name="Koningstein G."/>
            <person name="Krogh S."/>
            <person name="Kumano M."/>
            <person name="Kurita K."/>
            <person name="Lapidus A."/>
            <person name="Lardinois S."/>
            <person name="Lauber J."/>
            <person name="Lazarevic V."/>
            <person name="Lee S.-M."/>
            <person name="Levine A."/>
            <person name="Liu H."/>
            <person name="Masuda S."/>
            <person name="Mauel C."/>
            <person name="Medigue C."/>
            <person name="Medina N."/>
            <person name="Mellado R.P."/>
            <person name="Mizuno M."/>
            <person name="Moestl D."/>
            <person name="Nakai S."/>
            <person name="Noback M."/>
            <person name="Noone D."/>
            <person name="O'Reilly M."/>
            <person name="Ogawa K."/>
            <person name="Ogiwara A."/>
            <person name="Oudega B."/>
            <person name="Park S.-H."/>
            <person name="Parro V."/>
            <person name="Pohl T.M."/>
            <person name="Portetelle D."/>
            <person name="Porwollik S."/>
            <person name="Prescott A.M."/>
            <person name="Presecan E."/>
            <person name="Pujic P."/>
            <person name="Purnelle B."/>
            <person name="Rapoport G."/>
            <person name="Rey M."/>
            <person name="Reynolds S."/>
            <person name="Rieger M."/>
            <person name="Rivolta C."/>
            <person name="Rocha E."/>
            <person name="Roche B."/>
            <person name="Rose M."/>
            <person name="Sadaie Y."/>
            <person name="Sato T."/>
            <person name="Scanlan E."/>
            <person name="Schleich S."/>
            <person name="Schroeter R."/>
            <person name="Scoffone F."/>
            <person name="Sekiguchi J."/>
            <person name="Sekowska A."/>
            <person name="Seror S.J."/>
            <person name="Serror P."/>
            <person name="Shin B.-S."/>
            <person name="Soldo B."/>
            <person name="Sorokin A."/>
            <person name="Tacconi E."/>
            <person name="Takagi T."/>
            <person name="Takahashi H."/>
            <person name="Takemaru K."/>
            <person name="Takeuchi M."/>
            <person name="Tamakoshi A."/>
            <person name="Tanaka T."/>
            <person name="Terpstra P."/>
            <person name="Tognoni A."/>
            <person name="Tosato V."/>
            <person name="Uchiyama S."/>
            <person name="Vandenbol M."/>
            <person name="Vannier F."/>
            <person name="Vassarotti A."/>
            <person name="Viari A."/>
            <person name="Wambutt R."/>
            <person name="Wedler E."/>
            <person name="Wedler H."/>
            <person name="Weitzenegger T."/>
            <person name="Winters P."/>
            <person name="Wipat A."/>
            <person name="Yamamoto H."/>
            <person name="Yamane K."/>
            <person name="Yasumoto K."/>
            <person name="Yata K."/>
            <person name="Yoshida K."/>
            <person name="Yoshikawa H.-F."/>
            <person name="Zumstein E."/>
            <person name="Yoshikawa H."/>
            <person name="Danchin A."/>
        </authorList>
    </citation>
    <scope>NUCLEOTIDE SEQUENCE [LARGE SCALE GENOMIC DNA]</scope>
    <source>
        <strain>168</strain>
    </source>
</reference>
<reference key="3">
    <citation type="journal article" date="2008" name="FEMS Microbiol. Lett.">
        <title>Glucomannan utilization operon of Bacillus subtilis.</title>
        <authorList>
            <person name="Sadaie Y."/>
            <person name="Nakadate H."/>
            <person name="Fukui R."/>
            <person name="Yee L.M."/>
            <person name="Asai K."/>
        </authorList>
    </citation>
    <scope>FUNCTION IN GLUCOMANNAN UTILIZATION</scope>
    <scope>CATALYTIC ACTIVITY</scope>
    <scope>INDUCTION</scope>
    <source>
        <strain>168</strain>
    </source>
</reference>
<gene>
    <name evidence="3" type="primary">gmuB</name>
    <name type="synonym">ydhM</name>
    <name type="ordered locus">BSU05810</name>
</gene>
<name>PTEB_BACSU</name>
<comment type="function">
    <text evidence="5">The phosphoenolpyruvate-dependent sugar phosphotransferase system (sugar PTS), a major carbohydrate active transport system, catalyzes the phosphorylation of incoming sugar substrates concomitantly with their translocation across the cell membrane. The enzyme II GmuABC PTS system is involved in the transport of oligo-glucomannans such as cellobiose or mannobiose.</text>
</comment>
<comment type="catalytic activity">
    <reaction evidence="1 5">
        <text>D-cellobiose(out) + N(pros)-phospho-L-histidyl-[protein] = 6-phospho-beta-D-glucosyl-(1-&gt;4)-D-glucose(in) + L-histidyl-[protein]</text>
        <dbReference type="Rhea" id="RHEA:49292"/>
        <dbReference type="Rhea" id="RHEA-COMP:9745"/>
        <dbReference type="Rhea" id="RHEA-COMP:9746"/>
        <dbReference type="ChEBI" id="CHEBI:17057"/>
        <dbReference type="ChEBI" id="CHEBI:29979"/>
        <dbReference type="ChEBI" id="CHEBI:58312"/>
        <dbReference type="ChEBI" id="CHEBI:64837"/>
        <dbReference type="EC" id="2.7.1.205"/>
    </reaction>
</comment>
<comment type="subcellular location">
    <subcellularLocation>
        <location evidence="4">Cytoplasm</location>
    </subcellularLocation>
</comment>
<comment type="induction">
    <text evidence="2">Up-regulated by konjac glucomannan and by cellobiose and mannobiose, the possible degradation products of glucomannan. Repressed by glucose via the carbon catabolite repression system. Also repressed by GmuR.</text>
</comment>
<comment type="domain">
    <text evidence="1">The PTS EIIB type-3 domain is phosphorylated by phospho-EIIA on a cysteinyl residue. Then, it transfers the phosphoryl group to the sugar substrate concomitantly with the sugar uptake processed by the PTS EIIC type-3 domain.</text>
</comment>
<feature type="chain" id="PRO_0000372434" description="PTS system oligo-beta-mannoside-specific EIIB component">
    <location>
        <begin position="1"/>
        <end position="103"/>
    </location>
</feature>
<feature type="domain" description="PTS EIIB type-3" evidence="1">
    <location>
        <begin position="1"/>
        <end position="103"/>
    </location>
</feature>
<feature type="active site" description="Phosphocysteine intermediate" evidence="4">
    <location>
        <position position="8"/>
    </location>
</feature>
<feature type="modified residue" description="Phosphocysteine; by EIIA" evidence="1">
    <location>
        <position position="8"/>
    </location>
</feature>
<sequence length="103" mass="11443">MKKILLACSSGMSTSLLVTKMKEYAQSIGEEAEIWAVGQDKAKEDMRKADAVLIGPQMSFLKSELQKEADQYNIQVEVIDMMAYGMADGKKAYEQALSLMVNQ</sequence>
<evidence type="ECO:0000255" key="1">
    <source>
        <dbReference type="PROSITE-ProRule" id="PRU00423"/>
    </source>
</evidence>
<evidence type="ECO:0000269" key="2">
    <source>
    </source>
</evidence>
<evidence type="ECO:0000303" key="3">
    <source>
    </source>
</evidence>
<evidence type="ECO:0000305" key="4"/>
<evidence type="ECO:0000305" key="5">
    <source>
    </source>
</evidence>
<accession>O05505</accession>
<accession>Q797E2</accession>
<dbReference type="EC" id="2.7.1.205" evidence="1 5"/>
<dbReference type="EMBL" id="D88802">
    <property type="protein sequence ID" value="BAA19705.1"/>
    <property type="molecule type" value="Genomic_DNA"/>
</dbReference>
<dbReference type="EMBL" id="AL009126">
    <property type="protein sequence ID" value="CAB12400.1"/>
    <property type="molecule type" value="Genomic_DNA"/>
</dbReference>
<dbReference type="PIR" id="A69785">
    <property type="entry name" value="A69785"/>
</dbReference>
<dbReference type="RefSeq" id="NP_388462.1">
    <property type="nucleotide sequence ID" value="NC_000964.3"/>
</dbReference>
<dbReference type="RefSeq" id="WP_003242472.1">
    <property type="nucleotide sequence ID" value="NZ_OZ025638.1"/>
</dbReference>
<dbReference type="SMR" id="O05505"/>
<dbReference type="FunCoup" id="O05505">
    <property type="interactions" value="112"/>
</dbReference>
<dbReference type="STRING" id="224308.BSU05810"/>
<dbReference type="TCDB" id="4.A.3.2.10">
    <property type="family name" value="the pts lactose-n,n'-diacetylchitobiose-Beta-glucoside (lac) family"/>
</dbReference>
<dbReference type="PaxDb" id="224308-BSU05810"/>
<dbReference type="EnsemblBacteria" id="CAB12400">
    <property type="protein sequence ID" value="CAB12400"/>
    <property type="gene ID" value="BSU_05810"/>
</dbReference>
<dbReference type="GeneID" id="938018"/>
<dbReference type="KEGG" id="bsu:BSU05810"/>
<dbReference type="PATRIC" id="fig|224308.179.peg.625"/>
<dbReference type="eggNOG" id="COG1440">
    <property type="taxonomic scope" value="Bacteria"/>
</dbReference>
<dbReference type="InParanoid" id="O05505"/>
<dbReference type="OrthoDB" id="9808134at2"/>
<dbReference type="PhylomeDB" id="O05505"/>
<dbReference type="BioCyc" id="BSUB:BSU05810-MONOMER"/>
<dbReference type="Proteomes" id="UP000001570">
    <property type="component" value="Chromosome"/>
</dbReference>
<dbReference type="GO" id="GO:0005737">
    <property type="term" value="C:cytoplasm"/>
    <property type="evidence" value="ECO:0007669"/>
    <property type="project" value="UniProtKB-SubCell"/>
</dbReference>
<dbReference type="GO" id="GO:0016301">
    <property type="term" value="F:kinase activity"/>
    <property type="evidence" value="ECO:0007669"/>
    <property type="project" value="UniProtKB-KW"/>
</dbReference>
<dbReference type="GO" id="GO:0008982">
    <property type="term" value="F:protein-N(PI)-phosphohistidine-sugar phosphotransferase activity"/>
    <property type="evidence" value="ECO:0007669"/>
    <property type="project" value="InterPro"/>
</dbReference>
<dbReference type="GO" id="GO:0090563">
    <property type="term" value="F:protein-phosphocysteine-sugar phosphotransferase activity"/>
    <property type="evidence" value="ECO:0000318"/>
    <property type="project" value="GO_Central"/>
</dbReference>
<dbReference type="GO" id="GO:0009401">
    <property type="term" value="P:phosphoenolpyruvate-dependent sugar phosphotransferase system"/>
    <property type="evidence" value="ECO:0000318"/>
    <property type="project" value="GO_Central"/>
</dbReference>
<dbReference type="GO" id="GO:0015774">
    <property type="term" value="P:polysaccharide transport"/>
    <property type="evidence" value="ECO:0007669"/>
    <property type="project" value="UniProtKB-KW"/>
</dbReference>
<dbReference type="CDD" id="cd05564">
    <property type="entry name" value="PTS_IIB_chitobiose_lichenan"/>
    <property type="match status" value="1"/>
</dbReference>
<dbReference type="Gene3D" id="3.40.50.2300">
    <property type="match status" value="1"/>
</dbReference>
<dbReference type="InterPro" id="IPR036095">
    <property type="entry name" value="PTS_EIIB-like_sf"/>
</dbReference>
<dbReference type="InterPro" id="IPR003501">
    <property type="entry name" value="PTS_EIIB_2/3"/>
</dbReference>
<dbReference type="InterPro" id="IPR013012">
    <property type="entry name" value="PTS_EIIB_3"/>
</dbReference>
<dbReference type="InterPro" id="IPR051819">
    <property type="entry name" value="PTS_sugar-specific_EIIB"/>
</dbReference>
<dbReference type="PANTHER" id="PTHR34581">
    <property type="entry name" value="PTS SYSTEM N,N'-DIACETYLCHITOBIOSE-SPECIFIC EIIB COMPONENT"/>
    <property type="match status" value="1"/>
</dbReference>
<dbReference type="PANTHER" id="PTHR34581:SF2">
    <property type="entry name" value="PTS SYSTEM N,N'-DIACETYLCHITOBIOSE-SPECIFIC EIIB COMPONENT"/>
    <property type="match status" value="1"/>
</dbReference>
<dbReference type="Pfam" id="PF02302">
    <property type="entry name" value="PTS_IIB"/>
    <property type="match status" value="1"/>
</dbReference>
<dbReference type="SUPFAM" id="SSF52794">
    <property type="entry name" value="PTS system IIB component-like"/>
    <property type="match status" value="1"/>
</dbReference>
<dbReference type="PROSITE" id="PS51100">
    <property type="entry name" value="PTS_EIIB_TYPE_3"/>
    <property type="match status" value="1"/>
</dbReference>
<keyword id="KW-0963">Cytoplasm</keyword>
<keyword id="KW-0418">Kinase</keyword>
<keyword id="KW-0597">Phosphoprotein</keyword>
<keyword id="KW-0598">Phosphotransferase system</keyword>
<keyword id="KW-0625">Polysaccharide transport</keyword>
<keyword id="KW-1185">Reference proteome</keyword>
<keyword id="KW-0762">Sugar transport</keyword>
<keyword id="KW-0808">Transferase</keyword>
<keyword id="KW-0813">Transport</keyword>
<protein>
    <recommendedName>
        <fullName evidence="3">PTS system oligo-beta-mannoside-specific EIIB component</fullName>
    </recommendedName>
    <alternativeName>
        <fullName evidence="3">Glucomannan utilization protein B</fullName>
    </alternativeName>
    <alternativeName>
        <fullName evidence="3">Oligo-beta-mannoside-specific phosphotransferase enzyme IIB component</fullName>
        <ecNumber evidence="1 5">2.7.1.205</ecNumber>
    </alternativeName>
</protein>
<organism>
    <name type="scientific">Bacillus subtilis (strain 168)</name>
    <dbReference type="NCBI Taxonomy" id="224308"/>
    <lineage>
        <taxon>Bacteria</taxon>
        <taxon>Bacillati</taxon>
        <taxon>Bacillota</taxon>
        <taxon>Bacilli</taxon>
        <taxon>Bacillales</taxon>
        <taxon>Bacillaceae</taxon>
        <taxon>Bacillus</taxon>
    </lineage>
</organism>